<gene>
    <name type="primary">Nsf</name>
    <name type="synonym">Erg1</name>
</gene>
<name>NSF_RAT</name>
<dbReference type="EC" id="3.6.4.6"/>
<dbReference type="EMBL" id="AF142097">
    <property type="protein sequence ID" value="AAD39485.1"/>
    <property type="molecule type" value="mRNA"/>
</dbReference>
<dbReference type="EMBL" id="AF189019">
    <property type="protein sequence ID" value="AAF01051.1"/>
    <property type="molecule type" value="mRNA"/>
</dbReference>
<dbReference type="RefSeq" id="NP_068516.1">
    <property type="nucleotide sequence ID" value="NM_021748.1"/>
</dbReference>
<dbReference type="SMR" id="Q9QUL6"/>
<dbReference type="BioGRID" id="248797">
    <property type="interactions" value="5"/>
</dbReference>
<dbReference type="CORUM" id="Q9QUL6"/>
<dbReference type="FunCoup" id="Q9QUL6">
    <property type="interactions" value="1798"/>
</dbReference>
<dbReference type="IntAct" id="Q9QUL6">
    <property type="interactions" value="7"/>
</dbReference>
<dbReference type="MINT" id="Q9QUL6"/>
<dbReference type="STRING" id="10116.ENSRNOP00000006361"/>
<dbReference type="GlyGen" id="Q9QUL6">
    <property type="glycosylation" value="1 site, 1 O-linked glycan (1 site)"/>
</dbReference>
<dbReference type="iPTMnet" id="Q9QUL6"/>
<dbReference type="PhosphoSitePlus" id="Q9QUL6"/>
<dbReference type="jPOST" id="Q9QUL6"/>
<dbReference type="PaxDb" id="10116-ENSRNOP00000006361"/>
<dbReference type="GeneID" id="60355"/>
<dbReference type="KEGG" id="rno:60355"/>
<dbReference type="UCSC" id="RGD:621594">
    <property type="organism name" value="rat"/>
</dbReference>
<dbReference type="AGR" id="RGD:621594"/>
<dbReference type="CTD" id="4905"/>
<dbReference type="RGD" id="621594">
    <property type="gene designation" value="Nsf"/>
</dbReference>
<dbReference type="eggNOG" id="KOG0741">
    <property type="taxonomic scope" value="Eukaryota"/>
</dbReference>
<dbReference type="InParanoid" id="Q9QUL6"/>
<dbReference type="PhylomeDB" id="Q9QUL6"/>
<dbReference type="Reactome" id="R-RNO-204005">
    <property type="pathway name" value="COPII-mediated vesicle transport"/>
</dbReference>
<dbReference type="Reactome" id="R-RNO-416993">
    <property type="pathway name" value="Trafficking of GluR2-containing AMPA receptors"/>
</dbReference>
<dbReference type="Reactome" id="R-RNO-6807878">
    <property type="pathway name" value="COPI-mediated anterograde transport"/>
</dbReference>
<dbReference type="Reactome" id="R-RNO-6811434">
    <property type="pathway name" value="COPI-dependent Golgi-to-ER retrograde traffic"/>
</dbReference>
<dbReference type="Reactome" id="R-RNO-6811438">
    <property type="pathway name" value="Intra-Golgi traffic"/>
</dbReference>
<dbReference type="Reactome" id="R-RNO-6811440">
    <property type="pathway name" value="Retrograde transport at the Trans-Golgi-Network"/>
</dbReference>
<dbReference type="PRO" id="PR:Q9QUL6"/>
<dbReference type="Proteomes" id="UP000002494">
    <property type="component" value="Unplaced"/>
</dbReference>
<dbReference type="GO" id="GO:0043198">
    <property type="term" value="C:dendritic shaft"/>
    <property type="evidence" value="ECO:0000314"/>
    <property type="project" value="UniProtKB"/>
</dbReference>
<dbReference type="GO" id="GO:0098982">
    <property type="term" value="C:GABA-ergic synapse"/>
    <property type="evidence" value="ECO:0000314"/>
    <property type="project" value="SynGO"/>
</dbReference>
<dbReference type="GO" id="GO:0005795">
    <property type="term" value="C:Golgi stack"/>
    <property type="evidence" value="ECO:0000314"/>
    <property type="project" value="RGD"/>
</dbReference>
<dbReference type="GO" id="GO:0005886">
    <property type="term" value="C:plasma membrane"/>
    <property type="evidence" value="ECO:0000266"/>
    <property type="project" value="RGD"/>
</dbReference>
<dbReference type="GO" id="GO:0014069">
    <property type="term" value="C:postsynaptic density"/>
    <property type="evidence" value="ECO:0000304"/>
    <property type="project" value="UniProtKB"/>
</dbReference>
<dbReference type="GO" id="GO:0099091">
    <property type="term" value="C:postsynaptic specialization, intracellular component"/>
    <property type="evidence" value="ECO:0000314"/>
    <property type="project" value="SynGO"/>
</dbReference>
<dbReference type="GO" id="GO:0005524">
    <property type="term" value="F:ATP binding"/>
    <property type="evidence" value="ECO:0007669"/>
    <property type="project" value="UniProtKB-KW"/>
</dbReference>
<dbReference type="GO" id="GO:0016887">
    <property type="term" value="F:ATP hydrolysis activity"/>
    <property type="evidence" value="ECO:0000314"/>
    <property type="project" value="UniProtKB"/>
</dbReference>
<dbReference type="GO" id="GO:0043008">
    <property type="term" value="F:ATP-dependent protein binding"/>
    <property type="evidence" value="ECO:0000353"/>
    <property type="project" value="RGD"/>
</dbReference>
<dbReference type="GO" id="GO:0140545">
    <property type="term" value="F:ATP-dependent protein disaggregase activity"/>
    <property type="evidence" value="ECO:0000250"/>
    <property type="project" value="ParkinsonsUK-UCL"/>
</dbReference>
<dbReference type="GO" id="GO:0031748">
    <property type="term" value="F:D1 dopamine receptor binding"/>
    <property type="evidence" value="ECO:0000353"/>
    <property type="project" value="RGD"/>
</dbReference>
<dbReference type="GO" id="GO:0035255">
    <property type="term" value="F:ionotropic glutamate receptor binding"/>
    <property type="evidence" value="ECO:0000353"/>
    <property type="project" value="ParkinsonsUK-UCL"/>
</dbReference>
<dbReference type="GO" id="GO:0046872">
    <property type="term" value="F:metal ion binding"/>
    <property type="evidence" value="ECO:0007669"/>
    <property type="project" value="UniProtKB-KW"/>
</dbReference>
<dbReference type="GO" id="GO:0030165">
    <property type="term" value="F:PDZ domain binding"/>
    <property type="evidence" value="ECO:0000266"/>
    <property type="project" value="RGD"/>
</dbReference>
<dbReference type="GO" id="GO:0019901">
    <property type="term" value="F:protein kinase binding"/>
    <property type="evidence" value="ECO:0000266"/>
    <property type="project" value="RGD"/>
</dbReference>
<dbReference type="GO" id="GO:0120283">
    <property type="term" value="F:protein serine/threonine kinase binding"/>
    <property type="evidence" value="ECO:0000353"/>
    <property type="project" value="RGD"/>
</dbReference>
<dbReference type="GO" id="GO:0044877">
    <property type="term" value="F:protein-containing complex binding"/>
    <property type="evidence" value="ECO:0000314"/>
    <property type="project" value="UniProtKB"/>
</dbReference>
<dbReference type="GO" id="GO:0031267">
    <property type="term" value="F:small GTPase binding"/>
    <property type="evidence" value="ECO:0000353"/>
    <property type="project" value="RGD"/>
</dbReference>
<dbReference type="GO" id="GO:0000149">
    <property type="term" value="F:SNARE binding"/>
    <property type="evidence" value="ECO:0000250"/>
    <property type="project" value="ParkinsonsUK-UCL"/>
</dbReference>
<dbReference type="GO" id="GO:0019905">
    <property type="term" value="F:syntaxin binding"/>
    <property type="evidence" value="ECO:0000266"/>
    <property type="project" value="RGD"/>
</dbReference>
<dbReference type="GO" id="GO:0017075">
    <property type="term" value="F:syntaxin-1 binding"/>
    <property type="evidence" value="ECO:0000266"/>
    <property type="project" value="RGD"/>
</dbReference>
<dbReference type="GO" id="GO:0043001">
    <property type="term" value="P:Golgi to plasma membrane protein transport"/>
    <property type="evidence" value="ECO:0000318"/>
    <property type="project" value="GO_Central"/>
</dbReference>
<dbReference type="GO" id="GO:0006891">
    <property type="term" value="P:intra-Golgi vesicle-mediated transport"/>
    <property type="evidence" value="ECO:0000318"/>
    <property type="project" value="GO_Central"/>
</dbReference>
<dbReference type="GO" id="GO:0006886">
    <property type="term" value="P:intracellular protein transport"/>
    <property type="evidence" value="ECO:0000266"/>
    <property type="project" value="RGD"/>
</dbReference>
<dbReference type="GO" id="GO:0045732">
    <property type="term" value="P:positive regulation of protein catabolic process"/>
    <property type="evidence" value="ECO:0000266"/>
    <property type="project" value="RGD"/>
</dbReference>
<dbReference type="GO" id="GO:0001921">
    <property type="term" value="P:positive regulation of receptor recycling"/>
    <property type="evidence" value="ECO:0000266"/>
    <property type="project" value="RGD"/>
</dbReference>
<dbReference type="GO" id="GO:0048260">
    <property type="term" value="P:positive regulation of receptor-mediated endocytosis"/>
    <property type="evidence" value="ECO:0000315"/>
    <property type="project" value="RGD"/>
</dbReference>
<dbReference type="GO" id="GO:0006813">
    <property type="term" value="P:potassium ion transport"/>
    <property type="evidence" value="ECO:0000266"/>
    <property type="project" value="RGD"/>
</dbReference>
<dbReference type="GO" id="GO:0032984">
    <property type="term" value="P:protein-containing complex disassembly"/>
    <property type="evidence" value="ECO:0000314"/>
    <property type="project" value="UniProtKB"/>
</dbReference>
<dbReference type="GO" id="GO:0017157">
    <property type="term" value="P:regulation of exocytosis"/>
    <property type="evidence" value="ECO:0000315"/>
    <property type="project" value="RGD"/>
</dbReference>
<dbReference type="GO" id="GO:0002090">
    <property type="term" value="P:regulation of receptor internalization"/>
    <property type="evidence" value="ECO:0000314"/>
    <property type="project" value="UniProtKB"/>
</dbReference>
<dbReference type="GO" id="GO:0035494">
    <property type="term" value="P:SNARE complex disassembly"/>
    <property type="evidence" value="ECO:0000250"/>
    <property type="project" value="ParkinsonsUK-UCL"/>
</dbReference>
<dbReference type="GO" id="GO:0016192">
    <property type="term" value="P:vesicle-mediated transport"/>
    <property type="evidence" value="ECO:0000315"/>
    <property type="project" value="RGD"/>
</dbReference>
<dbReference type="CDD" id="cd19504">
    <property type="entry name" value="RecA-like_NSF-SEC18_r1-like"/>
    <property type="match status" value="1"/>
</dbReference>
<dbReference type="FunFam" id="1.10.8.60:FF:000026">
    <property type="entry name" value="vesicle-fusing ATPase isoform X1"/>
    <property type="match status" value="1"/>
</dbReference>
<dbReference type="FunFam" id="1.10.8.60:FF:000031">
    <property type="entry name" value="vesicle-fusing ATPase isoform X1"/>
    <property type="match status" value="1"/>
</dbReference>
<dbReference type="FunFam" id="2.40.40.20:FF:000006">
    <property type="entry name" value="vesicle-fusing ATPase isoform X1"/>
    <property type="match status" value="1"/>
</dbReference>
<dbReference type="FunFam" id="3.10.330.10:FF:000003">
    <property type="entry name" value="vesicle-fusing ATPase isoform X1"/>
    <property type="match status" value="1"/>
</dbReference>
<dbReference type="FunFam" id="3.40.50.300:FF:000166">
    <property type="entry name" value="vesicle-fusing ATPase isoform X1"/>
    <property type="match status" value="1"/>
</dbReference>
<dbReference type="FunFam" id="3.40.50.300:FF:000187">
    <property type="entry name" value="Vesicular-fusion ATPase SEC18"/>
    <property type="match status" value="1"/>
</dbReference>
<dbReference type="Gene3D" id="1.10.8.60">
    <property type="match status" value="2"/>
</dbReference>
<dbReference type="Gene3D" id="2.40.40.20">
    <property type="match status" value="1"/>
</dbReference>
<dbReference type="Gene3D" id="3.10.330.10">
    <property type="match status" value="1"/>
</dbReference>
<dbReference type="Gene3D" id="3.40.50.300">
    <property type="entry name" value="P-loop containing nucleotide triphosphate hydrolases"/>
    <property type="match status" value="2"/>
</dbReference>
<dbReference type="InterPro" id="IPR003593">
    <property type="entry name" value="AAA+_ATPase"/>
</dbReference>
<dbReference type="InterPro" id="IPR041569">
    <property type="entry name" value="AAA_lid_3"/>
</dbReference>
<dbReference type="InterPro" id="IPR009010">
    <property type="entry name" value="Asp_de-COase-like_dom_sf"/>
</dbReference>
<dbReference type="InterPro" id="IPR003959">
    <property type="entry name" value="ATPase_AAA_core"/>
</dbReference>
<dbReference type="InterPro" id="IPR003960">
    <property type="entry name" value="ATPase_AAA_CS"/>
</dbReference>
<dbReference type="InterPro" id="IPR004201">
    <property type="entry name" value="Cdc48_dom2"/>
</dbReference>
<dbReference type="InterPro" id="IPR029067">
    <property type="entry name" value="CDC48_domain_2-like_sf"/>
</dbReference>
<dbReference type="InterPro" id="IPR003338">
    <property type="entry name" value="CDC4_N-term_subdom"/>
</dbReference>
<dbReference type="InterPro" id="IPR054419">
    <property type="entry name" value="NSF_ATPase_lid"/>
</dbReference>
<dbReference type="InterPro" id="IPR027417">
    <property type="entry name" value="P-loop_NTPase"/>
</dbReference>
<dbReference type="InterPro" id="IPR039812">
    <property type="entry name" value="Vesicle-fus_ATPase"/>
</dbReference>
<dbReference type="PANTHER" id="PTHR23078:SF3">
    <property type="entry name" value="VESICLE-FUSING ATPASE"/>
    <property type="match status" value="1"/>
</dbReference>
<dbReference type="PANTHER" id="PTHR23078">
    <property type="entry name" value="VESICULAR-FUSION PROTEIN NSF"/>
    <property type="match status" value="1"/>
</dbReference>
<dbReference type="Pfam" id="PF00004">
    <property type="entry name" value="AAA"/>
    <property type="match status" value="2"/>
</dbReference>
<dbReference type="Pfam" id="PF17862">
    <property type="entry name" value="AAA_lid_3"/>
    <property type="match status" value="1"/>
</dbReference>
<dbReference type="Pfam" id="PF02933">
    <property type="entry name" value="CDC48_2"/>
    <property type="match status" value="1"/>
</dbReference>
<dbReference type="Pfam" id="PF02359">
    <property type="entry name" value="CDC48_N"/>
    <property type="match status" value="1"/>
</dbReference>
<dbReference type="Pfam" id="PF21964">
    <property type="entry name" value="NSF_ATPase_lid"/>
    <property type="match status" value="1"/>
</dbReference>
<dbReference type="PRINTS" id="PR00830">
    <property type="entry name" value="ENDOLAPTASE"/>
</dbReference>
<dbReference type="SMART" id="SM00382">
    <property type="entry name" value="AAA"/>
    <property type="match status" value="2"/>
</dbReference>
<dbReference type="SMART" id="SM01072">
    <property type="entry name" value="CDC48_2"/>
    <property type="match status" value="1"/>
</dbReference>
<dbReference type="SMART" id="SM01073">
    <property type="entry name" value="CDC48_N"/>
    <property type="match status" value="1"/>
</dbReference>
<dbReference type="SUPFAM" id="SSF50692">
    <property type="entry name" value="ADC-like"/>
    <property type="match status" value="1"/>
</dbReference>
<dbReference type="SUPFAM" id="SSF54585">
    <property type="entry name" value="Cdc48 domain 2-like"/>
    <property type="match status" value="1"/>
</dbReference>
<dbReference type="SUPFAM" id="SSF52540">
    <property type="entry name" value="P-loop containing nucleoside triphosphate hydrolases"/>
    <property type="match status" value="2"/>
</dbReference>
<dbReference type="PROSITE" id="PS00674">
    <property type="entry name" value="AAA"/>
    <property type="match status" value="1"/>
</dbReference>
<organism>
    <name type="scientific">Rattus norvegicus</name>
    <name type="common">Rat</name>
    <dbReference type="NCBI Taxonomy" id="10116"/>
    <lineage>
        <taxon>Eukaryota</taxon>
        <taxon>Metazoa</taxon>
        <taxon>Chordata</taxon>
        <taxon>Craniata</taxon>
        <taxon>Vertebrata</taxon>
        <taxon>Euteleostomi</taxon>
        <taxon>Mammalia</taxon>
        <taxon>Eutheria</taxon>
        <taxon>Euarchontoglires</taxon>
        <taxon>Glires</taxon>
        <taxon>Rodentia</taxon>
        <taxon>Myomorpha</taxon>
        <taxon>Muroidea</taxon>
        <taxon>Muridae</taxon>
        <taxon>Murinae</taxon>
        <taxon>Rattus</taxon>
    </lineage>
</organism>
<proteinExistence type="evidence at protein level"/>
<protein>
    <recommendedName>
        <fullName>Vesicle-fusing ATPase</fullName>
        <ecNumber>3.6.4.6</ecNumber>
    </recommendedName>
    <alternativeName>
        <fullName>N-ethylmaleimide-sensitive fusion protein</fullName>
        <shortName>NEM-sensitive fusion protein</shortName>
    </alternativeName>
    <alternativeName>
        <fullName>Vesicular-fusion protein NSF</fullName>
    </alternativeName>
</protein>
<reference key="1">
    <citation type="submission" date="1999-04" db="EMBL/GenBank/DDBJ databases">
        <authorList>
            <person name="Guan Z."/>
            <person name="Lu L.R."/>
            <person name="Zheng Z.C."/>
            <person name="Liu X.Y."/>
        </authorList>
    </citation>
    <scope>NUCLEOTIDE SEQUENCE [MRNA]</scope>
    <source>
        <strain>Sprague-Dawley</strain>
        <tissue>Brain</tissue>
    </source>
</reference>
<reference key="2">
    <citation type="submission" date="1999-09" db="EMBL/GenBank/DDBJ databases">
        <authorList>
            <person name="Viswanathan V."/>
            <person name="Vincent S.R."/>
        </authorList>
    </citation>
    <scope>NUCLEOTIDE SEQUENCE [MRNA]</scope>
    <source>
        <strain>Sprague-Dawley</strain>
    </source>
</reference>
<reference key="3">
    <citation type="submission" date="2007-04" db="UniProtKB">
        <authorList>
            <person name="Lubec G."/>
            <person name="Afjehi-Sadat L."/>
            <person name="Diao W."/>
        </authorList>
    </citation>
    <scope>PROTEIN SEQUENCE OF 11-27; 69-87; 170-187; 218-232; 255-266; 316-335; 338-357; 404-413; 435-446; 534-549; 556-566; 595-631 AND 708-725</scope>
    <scope>IDENTIFICATION BY MASS SPECTROMETRY</scope>
    <source>
        <strain>Sprague-Dawley</strain>
        <tissue>Hippocampus</tissue>
        <tissue>Spinal cord</tissue>
    </source>
</reference>
<reference key="4">
    <citation type="journal article" date="2006" name="J. Biol. Chem.">
        <title>Pctaire1 phosphorylates N-ethylmaleimide-sensitive fusion protein: implications in the regulation of its hexamerization and exocytosis.</title>
        <authorList>
            <person name="Liu Y."/>
            <person name="Cheng K."/>
            <person name="Gong K."/>
            <person name="Fu A.K."/>
            <person name="Ip N.Y."/>
        </authorList>
    </citation>
    <scope>INTERACTION WITH CDK16</scope>
    <scope>TISSUE SPECIFICITY</scope>
</reference>
<reference key="5">
    <citation type="journal article" date="2010" name="Nat. Neurosci.">
        <title>Plk2 attachment to NSF induces homeostatic removal of GluA2 during chronic overexcitation.</title>
        <authorList>
            <person name="Evers D.M."/>
            <person name="Matta J.A."/>
            <person name="Hoe H.S."/>
            <person name="Zarkowsky D."/>
            <person name="Lee S.H."/>
            <person name="Isaac J.T."/>
            <person name="Pak D.T."/>
        </authorList>
    </citation>
    <scope>INTERACTION WITH GRIA2 AND NSF</scope>
</reference>
<reference key="6">
    <citation type="journal article" date="2012" name="Nat. Commun.">
        <title>Quantitative maps of protein phosphorylation sites across 14 different rat organs and tissues.</title>
        <authorList>
            <person name="Lundby A."/>
            <person name="Secher A."/>
            <person name="Lage K."/>
            <person name="Nordsborg N.B."/>
            <person name="Dmytriyev A."/>
            <person name="Lundby C."/>
            <person name="Olsen J.V."/>
        </authorList>
    </citation>
    <scope>IDENTIFICATION BY MASS SPECTROMETRY [LARGE SCALE ANALYSIS]</scope>
</reference>
<sequence length="744" mass="82652">MAGRTMQAARCPTDELSLSNCAVVNEKDYQSGQHVMVRTSPNHKYIFTLRTHPSVVPGCIAFSLPQRKWAGLSIGQDIEVALYSFDKAKQCIGTMTIEIDFLQKKNIDSNPYDTDKMAAEFIQQFNHQAFSVGQQLVFSFNDKLFGLLVKDIEAMDPSILKGEPASGKRQKIEVGLVVGNSQVAFEKAENSSLNLIGKAKTKENRQSIINPDWNFEKMGIGGLDKEFSDIFRRAFASRVFPPEIVEQMGCKHVKGILLYGPPGCGKTLLARQIGKMLNAREPKVVNGPEILNKYVGESEANIRKLFADAEEEQRRLGANSGLHIIIFDEIDAICKQRGSMAGSTGVHDTVVNQLLSKIDGVEQLNNILVIGMTNRPDLIDEALLRPGRLEVKMEIGLPDEKGRLQILHIHTARMRGHQLLSADVDIKELAVETKNFSGAELEGLVRAAQSTAMNRHIKASTKVEVDMEKAESLQVTRGDFLASLENDIKPAFGTNQEDYASYIMNGIIKWGDPVTRVLDDGELLVQQTKNSDRTPLVSVLLEGPPHSGKTALAAKIAEESNFPFIKICSPDKMIGFSETAKCQAMKKIFDDAYKSQLSCVVVDDIERLLDYVPIGPRFSNLVLQALLVLLKKAPPQGRKLLIIGTTSRKDVLQEMEMLNAFSTTIHVPNIATGEQLLEALELLGNFKDKERTTIAQQVKGKKVWIGIKKLLMLIEMSLQMDPEYRVRKFLALMREEGASPLDFD</sequence>
<evidence type="ECO:0000250" key="1"/>
<evidence type="ECO:0000250" key="2">
    <source>
        <dbReference type="UniProtKB" id="P18708"/>
    </source>
</evidence>
<evidence type="ECO:0000250" key="3">
    <source>
        <dbReference type="UniProtKB" id="P46459"/>
    </source>
</evidence>
<evidence type="ECO:0000250" key="4">
    <source>
        <dbReference type="UniProtKB" id="P46460"/>
    </source>
</evidence>
<evidence type="ECO:0000269" key="5">
    <source>
    </source>
</evidence>
<evidence type="ECO:0000269" key="6">
    <source>
    </source>
</evidence>
<evidence type="ECO:0000305" key="7"/>
<comment type="function">
    <text>Required for vesicle-mediated transport. Catalyzes the fusion of transport vesicles within the Golgi cisternae. Is also required for transport from the endoplasmic reticulum to the Golgi stack. Seems to function as a fusion protein required for the delivery of cargo proteins to all compartments of the Golgi stack independent of vesicle origin. Interaction with AMPAR subunit GRIA2 leads to influence GRIA2 membrane cycling.</text>
</comment>
<comment type="catalytic activity">
    <reaction>
        <text>ATP + H2O = ADP + phosphate + H(+)</text>
        <dbReference type="Rhea" id="RHEA:13065"/>
        <dbReference type="ChEBI" id="CHEBI:15377"/>
        <dbReference type="ChEBI" id="CHEBI:15378"/>
        <dbReference type="ChEBI" id="CHEBI:30616"/>
        <dbReference type="ChEBI" id="CHEBI:43474"/>
        <dbReference type="ChEBI" id="CHEBI:456216"/>
        <dbReference type="EC" id="3.6.4.6"/>
    </reaction>
</comment>
<comment type="cofactor">
    <cofactor evidence="2">
        <name>Mg(2+)</name>
        <dbReference type="ChEBI" id="CHEBI:18420"/>
    </cofactor>
    <text evidence="2">Binds 1 Mg(2+) ion per subunit.</text>
</comment>
<comment type="subunit">
    <text evidence="1 5 6">Homohexamer. Interacts with GABARAP and GABARAPL2 (By similarity). Interacts with GRIA2. Interacts with PLK2, leading to disrupt the interaction with GRIA2. Interacts with MUSK; may regulate MUSK endocytosis and activity (By similarity). Interacts with CDK16.</text>
</comment>
<comment type="interaction">
    <interactant intactId="EBI-925794">
        <id>Q9QUL6</id>
    </interactant>
    <interactant intactId="EBI-77718">
        <id>P19491</id>
        <label>Gria2</label>
    </interactant>
    <organismsDiffer>false</organismsDiffer>
    <experiments>5</experiments>
</comment>
<comment type="subcellular location">
    <subcellularLocation>
        <location evidence="1">Cytoplasm</location>
    </subcellularLocation>
</comment>
<comment type="tissue specificity">
    <text evidence="5">Detected in brain (at protein level).</text>
</comment>
<comment type="PTM">
    <text evidence="1">Phosphorylation at Ser-569 interferes with homohexamerization.</text>
</comment>
<comment type="similarity">
    <text evidence="7">Belongs to the AAA ATPase family.</text>
</comment>
<feature type="chain" id="PRO_0000263087" description="Vesicle-fusing ATPase">
    <location>
        <begin position="1"/>
        <end position="744"/>
    </location>
</feature>
<feature type="binding site" evidence="2">
    <location>
        <begin position="505"/>
        <end position="510"/>
    </location>
    <ligand>
        <name>ATP</name>
        <dbReference type="ChEBI" id="CHEBI:30616"/>
    </ligand>
</feature>
<feature type="binding site" evidence="2">
    <location>
        <begin position="545"/>
        <end position="552"/>
    </location>
    <ligand>
        <name>ATP</name>
        <dbReference type="ChEBI" id="CHEBI:30616"/>
    </ligand>
</feature>
<feature type="binding site" evidence="2">
    <location>
        <position position="550"/>
    </location>
    <ligand>
        <name>Mg(2+)</name>
        <dbReference type="ChEBI" id="CHEBI:18420"/>
    </ligand>
</feature>
<feature type="modified residue" description="N6-acetyllysine" evidence="4">
    <location>
        <position position="105"/>
    </location>
</feature>
<feature type="modified residue" description="Phosphoserine" evidence="3">
    <location>
        <position position="207"/>
    </location>
</feature>
<feature type="modified residue" description="Phosphotyrosine" evidence="4">
    <location>
        <position position="259"/>
    </location>
</feature>
<feature type="modified residue" description="Phosphoserine; by CDK16" evidence="4">
    <location>
        <position position="569"/>
    </location>
</feature>
<keyword id="KW-0007">Acetylation</keyword>
<keyword id="KW-0067">ATP-binding</keyword>
<keyword id="KW-0963">Cytoplasm</keyword>
<keyword id="KW-0903">Direct protein sequencing</keyword>
<keyword id="KW-0378">Hydrolase</keyword>
<keyword id="KW-0460">Magnesium</keyword>
<keyword id="KW-0479">Metal-binding</keyword>
<keyword id="KW-0547">Nucleotide-binding</keyword>
<keyword id="KW-0597">Phosphoprotein</keyword>
<keyword id="KW-0653">Protein transport</keyword>
<keyword id="KW-1185">Reference proteome</keyword>
<keyword id="KW-0677">Repeat</keyword>
<keyword id="KW-0813">Transport</keyword>
<accession>Q9QUL6</accession>